<keyword id="KW-0066">ATP synthesis</keyword>
<keyword id="KW-0997">Cell inner membrane</keyword>
<keyword id="KW-1003">Cell membrane</keyword>
<keyword id="KW-0138">CF(0)</keyword>
<keyword id="KW-0375">Hydrogen ion transport</keyword>
<keyword id="KW-0406">Ion transport</keyword>
<keyword id="KW-0472">Membrane</keyword>
<keyword id="KW-0812">Transmembrane</keyword>
<keyword id="KW-1133">Transmembrane helix</keyword>
<keyword id="KW-0813">Transport</keyword>
<reference key="1">
    <citation type="journal article" date="2003" name="Nat. Genet.">
        <title>Comparative analysis of the genome sequences of Bordetella pertussis, Bordetella parapertussis and Bordetella bronchiseptica.</title>
        <authorList>
            <person name="Parkhill J."/>
            <person name="Sebaihia M."/>
            <person name="Preston A."/>
            <person name="Murphy L.D."/>
            <person name="Thomson N.R."/>
            <person name="Harris D.E."/>
            <person name="Holden M.T.G."/>
            <person name="Churcher C.M."/>
            <person name="Bentley S.D."/>
            <person name="Mungall K.L."/>
            <person name="Cerdeno-Tarraga A.-M."/>
            <person name="Temple L."/>
            <person name="James K.D."/>
            <person name="Harris B."/>
            <person name="Quail M.A."/>
            <person name="Achtman M."/>
            <person name="Atkin R."/>
            <person name="Baker S."/>
            <person name="Basham D."/>
            <person name="Bason N."/>
            <person name="Cherevach I."/>
            <person name="Chillingworth T."/>
            <person name="Collins M."/>
            <person name="Cronin A."/>
            <person name="Davis P."/>
            <person name="Doggett J."/>
            <person name="Feltwell T."/>
            <person name="Goble A."/>
            <person name="Hamlin N."/>
            <person name="Hauser H."/>
            <person name="Holroyd S."/>
            <person name="Jagels K."/>
            <person name="Leather S."/>
            <person name="Moule S."/>
            <person name="Norberczak H."/>
            <person name="O'Neil S."/>
            <person name="Ormond D."/>
            <person name="Price C."/>
            <person name="Rabbinowitsch E."/>
            <person name="Rutter S."/>
            <person name="Sanders M."/>
            <person name="Saunders D."/>
            <person name="Seeger K."/>
            <person name="Sharp S."/>
            <person name="Simmonds M."/>
            <person name="Skelton J."/>
            <person name="Squares R."/>
            <person name="Squares S."/>
            <person name="Stevens K."/>
            <person name="Unwin L."/>
            <person name="Whitehead S."/>
            <person name="Barrell B.G."/>
            <person name="Maskell D.J."/>
        </authorList>
    </citation>
    <scope>NUCLEOTIDE SEQUENCE [LARGE SCALE GENOMIC DNA]</scope>
    <source>
        <strain>ATCC BAA-588 / NCTC 13252 / RB50</strain>
    </source>
</reference>
<organism>
    <name type="scientific">Bordetella bronchiseptica (strain ATCC BAA-588 / NCTC 13252 / RB50)</name>
    <name type="common">Alcaligenes bronchisepticus</name>
    <dbReference type="NCBI Taxonomy" id="257310"/>
    <lineage>
        <taxon>Bacteria</taxon>
        <taxon>Pseudomonadati</taxon>
        <taxon>Pseudomonadota</taxon>
        <taxon>Betaproteobacteria</taxon>
        <taxon>Burkholderiales</taxon>
        <taxon>Alcaligenaceae</taxon>
        <taxon>Bordetella</taxon>
    </lineage>
</organism>
<evidence type="ECO:0000255" key="1">
    <source>
        <dbReference type="HAMAP-Rule" id="MF_01398"/>
    </source>
</evidence>
<dbReference type="EMBL" id="BX640451">
    <property type="protein sequence ID" value="CAE34971.1"/>
    <property type="molecule type" value="Genomic_DNA"/>
</dbReference>
<dbReference type="RefSeq" id="WP_003815350.1">
    <property type="nucleotide sequence ID" value="NC_002927.3"/>
</dbReference>
<dbReference type="SMR" id="Q7WEM5"/>
<dbReference type="KEGG" id="bbr:BB4609"/>
<dbReference type="eggNOG" id="COG0711">
    <property type="taxonomic scope" value="Bacteria"/>
</dbReference>
<dbReference type="HOGENOM" id="CLU_079215_4_5_4"/>
<dbReference type="Proteomes" id="UP000001027">
    <property type="component" value="Chromosome"/>
</dbReference>
<dbReference type="GO" id="GO:0005886">
    <property type="term" value="C:plasma membrane"/>
    <property type="evidence" value="ECO:0007669"/>
    <property type="project" value="UniProtKB-SubCell"/>
</dbReference>
<dbReference type="GO" id="GO:0045259">
    <property type="term" value="C:proton-transporting ATP synthase complex"/>
    <property type="evidence" value="ECO:0007669"/>
    <property type="project" value="UniProtKB-KW"/>
</dbReference>
<dbReference type="GO" id="GO:0046933">
    <property type="term" value="F:proton-transporting ATP synthase activity, rotational mechanism"/>
    <property type="evidence" value="ECO:0007669"/>
    <property type="project" value="UniProtKB-UniRule"/>
</dbReference>
<dbReference type="GO" id="GO:0046961">
    <property type="term" value="F:proton-transporting ATPase activity, rotational mechanism"/>
    <property type="evidence" value="ECO:0007669"/>
    <property type="project" value="TreeGrafter"/>
</dbReference>
<dbReference type="CDD" id="cd06503">
    <property type="entry name" value="ATP-synt_Fo_b"/>
    <property type="match status" value="1"/>
</dbReference>
<dbReference type="Gene3D" id="1.20.5.620">
    <property type="entry name" value="F1F0 ATP synthase subunit B, membrane domain"/>
    <property type="match status" value="1"/>
</dbReference>
<dbReference type="HAMAP" id="MF_01398">
    <property type="entry name" value="ATP_synth_b_bprime"/>
    <property type="match status" value="1"/>
</dbReference>
<dbReference type="InterPro" id="IPR028987">
    <property type="entry name" value="ATP_synth_B-like_membr_sf"/>
</dbReference>
<dbReference type="InterPro" id="IPR002146">
    <property type="entry name" value="ATP_synth_b/b'su_bac/chlpt"/>
</dbReference>
<dbReference type="InterPro" id="IPR005864">
    <property type="entry name" value="ATP_synth_F0_bsu_bac"/>
</dbReference>
<dbReference type="InterPro" id="IPR050059">
    <property type="entry name" value="ATP_synthase_B_chain"/>
</dbReference>
<dbReference type="NCBIfam" id="TIGR01144">
    <property type="entry name" value="ATP_synt_b"/>
    <property type="match status" value="1"/>
</dbReference>
<dbReference type="NCBIfam" id="NF004411">
    <property type="entry name" value="PRK05759.1-2"/>
    <property type="match status" value="1"/>
</dbReference>
<dbReference type="PANTHER" id="PTHR33445:SF1">
    <property type="entry name" value="ATP SYNTHASE SUBUNIT B"/>
    <property type="match status" value="1"/>
</dbReference>
<dbReference type="PANTHER" id="PTHR33445">
    <property type="entry name" value="ATP SYNTHASE SUBUNIT B', CHLOROPLASTIC"/>
    <property type="match status" value="1"/>
</dbReference>
<dbReference type="Pfam" id="PF00430">
    <property type="entry name" value="ATP-synt_B"/>
    <property type="match status" value="1"/>
</dbReference>
<dbReference type="SUPFAM" id="SSF81573">
    <property type="entry name" value="F1F0 ATP synthase subunit B, membrane domain"/>
    <property type="match status" value="1"/>
</dbReference>
<comment type="function">
    <text evidence="1">F(1)F(0) ATP synthase produces ATP from ADP in the presence of a proton or sodium gradient. F-type ATPases consist of two structural domains, F(1) containing the extramembraneous catalytic core and F(0) containing the membrane proton channel, linked together by a central stalk and a peripheral stalk. During catalysis, ATP synthesis in the catalytic domain of F(1) is coupled via a rotary mechanism of the central stalk subunits to proton translocation.</text>
</comment>
<comment type="function">
    <text evidence="1">Component of the F(0) channel, it forms part of the peripheral stalk, linking F(1) to F(0).</text>
</comment>
<comment type="subunit">
    <text evidence="1">F-type ATPases have 2 components, F(1) - the catalytic core - and F(0) - the membrane proton channel. F(1) has five subunits: alpha(3), beta(3), gamma(1), delta(1), epsilon(1). F(0) has three main subunits: a(1), b(2) and c(10-14). The alpha and beta chains form an alternating ring which encloses part of the gamma chain. F(1) is attached to F(0) by a central stalk formed by the gamma and epsilon chains, while a peripheral stalk is formed by the delta and b chains.</text>
</comment>
<comment type="subcellular location">
    <subcellularLocation>
        <location evidence="1">Cell inner membrane</location>
        <topology evidence="1">Single-pass membrane protein</topology>
    </subcellularLocation>
</comment>
<comment type="similarity">
    <text evidence="1">Belongs to the ATPase B chain family.</text>
</comment>
<feature type="chain" id="PRO_0000368357" description="ATP synthase subunit b">
    <location>
        <begin position="1"/>
        <end position="156"/>
    </location>
</feature>
<feature type="transmembrane region" description="Helical" evidence="1">
    <location>
        <begin position="7"/>
        <end position="27"/>
    </location>
</feature>
<proteinExistence type="inferred from homology"/>
<name>ATPF_BORBR</name>
<protein>
    <recommendedName>
        <fullName evidence="1">ATP synthase subunit b</fullName>
    </recommendedName>
    <alternativeName>
        <fullName evidence="1">ATP synthase F(0) sector subunit b</fullName>
    </alternativeName>
    <alternativeName>
        <fullName evidence="1">ATPase subunit I</fullName>
    </alternativeName>
    <alternativeName>
        <fullName evidence="1">F-type ATPase subunit b</fullName>
        <shortName evidence="1">F-ATPase subunit b</shortName>
    </alternativeName>
</protein>
<accession>Q7WEM5</accession>
<sequence length="156" mass="17261">MNLNATIFFQMLVFFVLGWFTMKFVWPPLTKAIDERRQKIADGLAAAEKGKADLAQAQARVSLIEASAKSETHARIIEAEKQAASVIEQARREAEAERARIVAQAAQDAAQEVQRAREALRDDVAALAVKGAEQILKREVDARAHAELLNQLKAQL</sequence>
<gene>
    <name evidence="1" type="primary">atpF</name>
    <name type="ordered locus">BB4609</name>
</gene>